<accession>Q0I3Q7</accession>
<sequence>MLIPIPALNDNYIWVYKRENLSVIVIDIPEIAALSQFIQAQNLVIGALLITHNHRDHIGALAEFKQFYPHVHIYGPAECADQGVTQVIDAGRLIIDEYHIDVLPTGGHTAQHLSFLIDGHLFCGDTLFSAGCGRVFTGDYSQMFTSLQLLKSLPDETIVCPAHEYTLGNLAFALTTGKNKSAVQKQLEKVKKLRAENKPSLPTTLALEKQINPFLQVESLDEFIELRKAKDVF</sequence>
<keyword id="KW-0378">Hydrolase</keyword>
<keyword id="KW-0479">Metal-binding</keyword>
<keyword id="KW-0862">Zinc</keyword>
<organism>
    <name type="scientific">Histophilus somni (strain 129Pt)</name>
    <name type="common">Haemophilus somnus</name>
    <dbReference type="NCBI Taxonomy" id="205914"/>
    <lineage>
        <taxon>Bacteria</taxon>
        <taxon>Pseudomonadati</taxon>
        <taxon>Pseudomonadota</taxon>
        <taxon>Gammaproteobacteria</taxon>
        <taxon>Pasteurellales</taxon>
        <taxon>Pasteurellaceae</taxon>
        <taxon>Histophilus</taxon>
    </lineage>
</organism>
<gene>
    <name evidence="1" type="primary">gloB</name>
    <name type="ordered locus">HS_0809</name>
</gene>
<reference key="1">
    <citation type="journal article" date="2007" name="J. Bacteriol.">
        <title>Complete genome sequence of Haemophilus somnus (Histophilus somni) strain 129Pt and comparison to Haemophilus ducreyi 35000HP and Haemophilus influenzae Rd.</title>
        <authorList>
            <person name="Challacombe J.F."/>
            <person name="Duncan A.J."/>
            <person name="Brettin T.S."/>
            <person name="Bruce D."/>
            <person name="Chertkov O."/>
            <person name="Detter J.C."/>
            <person name="Han C.S."/>
            <person name="Misra M."/>
            <person name="Richardson P."/>
            <person name="Tapia R."/>
            <person name="Thayer N."/>
            <person name="Xie G."/>
            <person name="Inzana T.J."/>
        </authorList>
    </citation>
    <scope>NUCLEOTIDE SEQUENCE [LARGE SCALE GENOMIC DNA]</scope>
    <source>
        <strain>129Pt</strain>
    </source>
</reference>
<name>GLO2_HISS1</name>
<dbReference type="EC" id="3.1.2.6" evidence="1"/>
<dbReference type="EMBL" id="CP000436">
    <property type="protein sequence ID" value="ABI25084.1"/>
    <property type="molecule type" value="Genomic_DNA"/>
</dbReference>
<dbReference type="SMR" id="Q0I3Q7"/>
<dbReference type="KEGG" id="hso:HS_0809"/>
<dbReference type="eggNOG" id="COG0491">
    <property type="taxonomic scope" value="Bacteria"/>
</dbReference>
<dbReference type="HOGENOM" id="CLU_030571_4_1_6"/>
<dbReference type="UniPathway" id="UPA00619">
    <property type="reaction ID" value="UER00676"/>
</dbReference>
<dbReference type="GO" id="GO:0004416">
    <property type="term" value="F:hydroxyacylglutathione hydrolase activity"/>
    <property type="evidence" value="ECO:0007669"/>
    <property type="project" value="UniProtKB-UniRule"/>
</dbReference>
<dbReference type="GO" id="GO:0046872">
    <property type="term" value="F:metal ion binding"/>
    <property type="evidence" value="ECO:0007669"/>
    <property type="project" value="UniProtKB-KW"/>
</dbReference>
<dbReference type="GO" id="GO:0019243">
    <property type="term" value="P:methylglyoxal catabolic process to D-lactate via S-lactoyl-glutathione"/>
    <property type="evidence" value="ECO:0007669"/>
    <property type="project" value="InterPro"/>
</dbReference>
<dbReference type="CDD" id="cd07723">
    <property type="entry name" value="hydroxyacylglutathione_hydrolase_MBL-fold"/>
    <property type="match status" value="1"/>
</dbReference>
<dbReference type="Gene3D" id="3.60.15.10">
    <property type="entry name" value="Ribonuclease Z/Hydroxyacylglutathione hydrolase-like"/>
    <property type="match status" value="1"/>
</dbReference>
<dbReference type="HAMAP" id="MF_01374">
    <property type="entry name" value="Glyoxalase_2"/>
    <property type="match status" value="1"/>
</dbReference>
<dbReference type="InterPro" id="IPR035680">
    <property type="entry name" value="Clx_II_MBL"/>
</dbReference>
<dbReference type="InterPro" id="IPR050110">
    <property type="entry name" value="Glyoxalase_II_hydrolase"/>
</dbReference>
<dbReference type="InterPro" id="IPR032282">
    <property type="entry name" value="HAGH_C"/>
</dbReference>
<dbReference type="InterPro" id="IPR017782">
    <property type="entry name" value="Hydroxyacylglutathione_Hdrlase"/>
</dbReference>
<dbReference type="InterPro" id="IPR001279">
    <property type="entry name" value="Metallo-B-lactamas"/>
</dbReference>
<dbReference type="InterPro" id="IPR036866">
    <property type="entry name" value="RibonucZ/Hydroxyglut_hydro"/>
</dbReference>
<dbReference type="NCBIfam" id="TIGR03413">
    <property type="entry name" value="GSH_gloB"/>
    <property type="match status" value="1"/>
</dbReference>
<dbReference type="PANTHER" id="PTHR43705">
    <property type="entry name" value="HYDROXYACYLGLUTATHIONE HYDROLASE"/>
    <property type="match status" value="1"/>
</dbReference>
<dbReference type="PANTHER" id="PTHR43705:SF1">
    <property type="entry name" value="HYDROXYACYLGLUTATHIONE HYDROLASE GLOB"/>
    <property type="match status" value="1"/>
</dbReference>
<dbReference type="Pfam" id="PF16123">
    <property type="entry name" value="HAGH_C"/>
    <property type="match status" value="1"/>
</dbReference>
<dbReference type="Pfam" id="PF00753">
    <property type="entry name" value="Lactamase_B"/>
    <property type="match status" value="1"/>
</dbReference>
<dbReference type="SMART" id="SM00849">
    <property type="entry name" value="Lactamase_B"/>
    <property type="match status" value="1"/>
</dbReference>
<dbReference type="SUPFAM" id="SSF56281">
    <property type="entry name" value="Metallo-hydrolase/oxidoreductase"/>
    <property type="match status" value="1"/>
</dbReference>
<evidence type="ECO:0000255" key="1">
    <source>
        <dbReference type="HAMAP-Rule" id="MF_01374"/>
    </source>
</evidence>
<comment type="function">
    <text evidence="1">Thiolesterase that catalyzes the hydrolysis of S-D-lactoyl-glutathione to form glutathione and D-lactic acid.</text>
</comment>
<comment type="catalytic activity">
    <reaction evidence="1">
        <text>an S-(2-hydroxyacyl)glutathione + H2O = a 2-hydroxy carboxylate + glutathione + H(+)</text>
        <dbReference type="Rhea" id="RHEA:21864"/>
        <dbReference type="ChEBI" id="CHEBI:15377"/>
        <dbReference type="ChEBI" id="CHEBI:15378"/>
        <dbReference type="ChEBI" id="CHEBI:57925"/>
        <dbReference type="ChEBI" id="CHEBI:58896"/>
        <dbReference type="ChEBI" id="CHEBI:71261"/>
        <dbReference type="EC" id="3.1.2.6"/>
    </reaction>
</comment>
<comment type="cofactor">
    <cofactor evidence="1">
        <name>Zn(2+)</name>
        <dbReference type="ChEBI" id="CHEBI:29105"/>
    </cofactor>
    <text evidence="1">Binds 2 Zn(2+) ions per subunit.</text>
</comment>
<comment type="pathway">
    <text evidence="1">Secondary metabolite metabolism; methylglyoxal degradation; (R)-lactate from methylglyoxal: step 2/2.</text>
</comment>
<comment type="subunit">
    <text evidence="1">Monomer.</text>
</comment>
<comment type="similarity">
    <text evidence="1">Belongs to the metallo-beta-lactamase superfamily. Glyoxalase II family.</text>
</comment>
<feature type="chain" id="PRO_0000309650" description="Hydroxyacylglutathione hydrolase">
    <location>
        <begin position="1"/>
        <end position="233"/>
    </location>
</feature>
<feature type="binding site" evidence="1">
    <location>
        <position position="52"/>
    </location>
    <ligand>
        <name>Zn(2+)</name>
        <dbReference type="ChEBI" id="CHEBI:29105"/>
        <label>1</label>
    </ligand>
</feature>
<feature type="binding site" evidence="1">
    <location>
        <position position="54"/>
    </location>
    <ligand>
        <name>Zn(2+)</name>
        <dbReference type="ChEBI" id="CHEBI:29105"/>
        <label>1</label>
    </ligand>
</feature>
<feature type="binding site" evidence="1">
    <location>
        <position position="56"/>
    </location>
    <ligand>
        <name>Zn(2+)</name>
        <dbReference type="ChEBI" id="CHEBI:29105"/>
        <label>2</label>
    </ligand>
</feature>
<feature type="binding site" evidence="1">
    <location>
        <position position="57"/>
    </location>
    <ligand>
        <name>Zn(2+)</name>
        <dbReference type="ChEBI" id="CHEBI:29105"/>
        <label>2</label>
    </ligand>
</feature>
<feature type="binding site" evidence="1">
    <location>
        <position position="108"/>
    </location>
    <ligand>
        <name>Zn(2+)</name>
        <dbReference type="ChEBI" id="CHEBI:29105"/>
        <label>1</label>
    </ligand>
</feature>
<feature type="binding site" evidence="1">
    <location>
        <position position="125"/>
    </location>
    <ligand>
        <name>Zn(2+)</name>
        <dbReference type="ChEBI" id="CHEBI:29105"/>
        <label>1</label>
    </ligand>
</feature>
<feature type="binding site" evidence="1">
    <location>
        <position position="125"/>
    </location>
    <ligand>
        <name>Zn(2+)</name>
        <dbReference type="ChEBI" id="CHEBI:29105"/>
        <label>2</label>
    </ligand>
</feature>
<feature type="binding site" evidence="1">
    <location>
        <position position="163"/>
    </location>
    <ligand>
        <name>Zn(2+)</name>
        <dbReference type="ChEBI" id="CHEBI:29105"/>
        <label>2</label>
    </ligand>
</feature>
<proteinExistence type="inferred from homology"/>
<protein>
    <recommendedName>
        <fullName evidence="1">Hydroxyacylglutathione hydrolase</fullName>
        <ecNumber evidence="1">3.1.2.6</ecNumber>
    </recommendedName>
    <alternativeName>
        <fullName evidence="1">Glyoxalase II</fullName>
        <shortName evidence="1">Glx II</shortName>
    </alternativeName>
</protein>